<name>FLIE_PSEA8</name>
<comment type="subcellular location">
    <subcellularLocation>
        <location evidence="1">Bacterial flagellum basal body</location>
    </subcellularLocation>
</comment>
<comment type="similarity">
    <text evidence="1">Belongs to the FliE family.</text>
</comment>
<sequence length="109" mass="11880">MSQGVEFNRLMLEMRSMQMEAMAKAKPVQAPAEVGAPSFSEMLSQAVDKVNETQQASTAMANAFEVGQSGVDLTDVMIASQKASVSFQAMTQVRNKLVQAYQDIMQMPV</sequence>
<proteinExistence type="inferred from homology"/>
<dbReference type="EMBL" id="FM209186">
    <property type="protein sequence ID" value="CAW28976.1"/>
    <property type="molecule type" value="Genomic_DNA"/>
</dbReference>
<dbReference type="RefSeq" id="WP_003086454.1">
    <property type="nucleotide sequence ID" value="NC_011770.1"/>
</dbReference>
<dbReference type="SMR" id="B7UX89"/>
<dbReference type="KEGG" id="pag:PLES_42211"/>
<dbReference type="HOGENOM" id="CLU_147249_0_0_6"/>
<dbReference type="GO" id="GO:0009425">
    <property type="term" value="C:bacterial-type flagellum basal body"/>
    <property type="evidence" value="ECO:0007669"/>
    <property type="project" value="UniProtKB-SubCell"/>
</dbReference>
<dbReference type="GO" id="GO:0003774">
    <property type="term" value="F:cytoskeletal motor activity"/>
    <property type="evidence" value="ECO:0007669"/>
    <property type="project" value="InterPro"/>
</dbReference>
<dbReference type="GO" id="GO:0005198">
    <property type="term" value="F:structural molecule activity"/>
    <property type="evidence" value="ECO:0007669"/>
    <property type="project" value="InterPro"/>
</dbReference>
<dbReference type="GO" id="GO:0071973">
    <property type="term" value="P:bacterial-type flagellum-dependent cell motility"/>
    <property type="evidence" value="ECO:0007669"/>
    <property type="project" value="InterPro"/>
</dbReference>
<dbReference type="HAMAP" id="MF_00724">
    <property type="entry name" value="FliE"/>
    <property type="match status" value="1"/>
</dbReference>
<dbReference type="InterPro" id="IPR001624">
    <property type="entry name" value="FliE"/>
</dbReference>
<dbReference type="NCBIfam" id="TIGR00205">
    <property type="entry name" value="fliE"/>
    <property type="match status" value="1"/>
</dbReference>
<dbReference type="PANTHER" id="PTHR34653">
    <property type="match status" value="1"/>
</dbReference>
<dbReference type="PANTHER" id="PTHR34653:SF1">
    <property type="entry name" value="FLAGELLAR HOOK-BASAL BODY COMPLEX PROTEIN FLIE"/>
    <property type="match status" value="1"/>
</dbReference>
<dbReference type="Pfam" id="PF02049">
    <property type="entry name" value="FliE"/>
    <property type="match status" value="1"/>
</dbReference>
<dbReference type="PRINTS" id="PR01006">
    <property type="entry name" value="FLGHOOKFLIE"/>
</dbReference>
<organism>
    <name type="scientific">Pseudomonas aeruginosa (strain LESB58)</name>
    <dbReference type="NCBI Taxonomy" id="557722"/>
    <lineage>
        <taxon>Bacteria</taxon>
        <taxon>Pseudomonadati</taxon>
        <taxon>Pseudomonadota</taxon>
        <taxon>Gammaproteobacteria</taxon>
        <taxon>Pseudomonadales</taxon>
        <taxon>Pseudomonadaceae</taxon>
        <taxon>Pseudomonas</taxon>
    </lineage>
</organism>
<gene>
    <name evidence="1" type="primary">fliE</name>
    <name type="ordered locus">PLES_42211</name>
</gene>
<feature type="chain" id="PRO_1000132665" description="Flagellar hook-basal body complex protein FliE">
    <location>
        <begin position="1"/>
        <end position="109"/>
    </location>
</feature>
<protein>
    <recommendedName>
        <fullName evidence="1">Flagellar hook-basal body complex protein FliE</fullName>
    </recommendedName>
</protein>
<reference key="1">
    <citation type="journal article" date="2009" name="Genome Res.">
        <title>Newly introduced genomic prophage islands are critical determinants of in vivo competitiveness in the Liverpool epidemic strain of Pseudomonas aeruginosa.</title>
        <authorList>
            <person name="Winstanley C."/>
            <person name="Langille M.G.I."/>
            <person name="Fothergill J.L."/>
            <person name="Kukavica-Ibrulj I."/>
            <person name="Paradis-Bleau C."/>
            <person name="Sanschagrin F."/>
            <person name="Thomson N.R."/>
            <person name="Winsor G.L."/>
            <person name="Quail M.A."/>
            <person name="Lennard N."/>
            <person name="Bignell A."/>
            <person name="Clarke L."/>
            <person name="Seeger K."/>
            <person name="Saunders D."/>
            <person name="Harris D."/>
            <person name="Parkhill J."/>
            <person name="Hancock R.E.W."/>
            <person name="Brinkman F.S.L."/>
            <person name="Levesque R.C."/>
        </authorList>
    </citation>
    <scope>NUCLEOTIDE SEQUENCE [LARGE SCALE GENOMIC DNA]</scope>
    <source>
        <strain>LESB58</strain>
    </source>
</reference>
<keyword id="KW-0975">Bacterial flagellum</keyword>
<evidence type="ECO:0000255" key="1">
    <source>
        <dbReference type="HAMAP-Rule" id="MF_00724"/>
    </source>
</evidence>
<accession>B7UX89</accession>